<name>SYFA_COREF</name>
<organism>
    <name type="scientific">Corynebacterium efficiens (strain DSM 44549 / YS-314 / AJ 12310 / JCM 11189 / NBRC 100395)</name>
    <dbReference type="NCBI Taxonomy" id="196164"/>
    <lineage>
        <taxon>Bacteria</taxon>
        <taxon>Bacillati</taxon>
        <taxon>Actinomycetota</taxon>
        <taxon>Actinomycetes</taxon>
        <taxon>Mycobacteriales</taxon>
        <taxon>Corynebacteriaceae</taxon>
        <taxon>Corynebacterium</taxon>
    </lineage>
</organism>
<gene>
    <name evidence="1" type="primary">pheS</name>
    <name type="ordered locus">CE1520</name>
</gene>
<feature type="chain" id="PRO_0000126695" description="Phenylalanine--tRNA ligase alpha subunit">
    <location>
        <begin position="1"/>
        <end position="340"/>
    </location>
</feature>
<feature type="binding site" evidence="1">
    <location>
        <position position="258"/>
    </location>
    <ligand>
        <name>Mg(2+)</name>
        <dbReference type="ChEBI" id="CHEBI:18420"/>
        <note>shared with beta subunit</note>
    </ligand>
</feature>
<protein>
    <recommendedName>
        <fullName evidence="1">Phenylalanine--tRNA ligase alpha subunit</fullName>
        <ecNumber evidence="1">6.1.1.20</ecNumber>
    </recommendedName>
    <alternativeName>
        <fullName evidence="1">Phenylalanyl-tRNA synthetase alpha subunit</fullName>
        <shortName evidence="1">PheRS</shortName>
    </alternativeName>
</protein>
<accession>Q8FTP1</accession>
<reference key="1">
    <citation type="journal article" date="2003" name="Genome Res.">
        <title>Comparative complete genome sequence analysis of the amino acid replacements responsible for the thermostability of Corynebacterium efficiens.</title>
        <authorList>
            <person name="Nishio Y."/>
            <person name="Nakamura Y."/>
            <person name="Kawarabayasi Y."/>
            <person name="Usuda Y."/>
            <person name="Kimura E."/>
            <person name="Sugimoto S."/>
            <person name="Matsui K."/>
            <person name="Yamagishi A."/>
            <person name="Kikuchi H."/>
            <person name="Ikeo K."/>
            <person name="Gojobori T."/>
        </authorList>
    </citation>
    <scope>NUCLEOTIDE SEQUENCE [LARGE SCALE GENOMIC DNA]</scope>
    <source>
        <strain>DSM 44549 / YS-314 / AJ 12310 / JCM 11189 / NBRC 100395</strain>
    </source>
</reference>
<sequence>MTEASLNEAATAAITAFDGADNLEELAALRRDHLGDNAPIPQARRSLGTIPKDQRKDAGRFVNMALGRVEKHFAQVKAQLEEKRNREVLEQERVDVTVPTTRTQVGALHPITILNEQIADIFVGMGWEVAEGPEVEAEYFNFDALNFLPDHPARTLQDTFHIGPEGSRQVLRTHTSPVQIRSMLDREVPIYIACPGRVFRTDELDATHTPVFHQIEGLAVDKGLTMAHLRGTLDHLARELFGPETKTRMRSNYFPFTEPSAEVDVWFPNKKGGAGWIEWGGCGMVNPNVLRAVGIDPEEYSGFAFGMGIERTLQFRNGLSDMRDMVEGDVRFTLPFGIQA</sequence>
<dbReference type="EC" id="6.1.1.20" evidence="1"/>
<dbReference type="EMBL" id="BA000035">
    <property type="protein sequence ID" value="BAC18330.1"/>
    <property type="status" value="ALT_INIT"/>
    <property type="molecule type" value="Genomic_DNA"/>
</dbReference>
<dbReference type="SMR" id="Q8FTP1"/>
<dbReference type="STRING" id="196164.gene:10741935"/>
<dbReference type="KEGG" id="cef:CE1520"/>
<dbReference type="eggNOG" id="COG0016">
    <property type="taxonomic scope" value="Bacteria"/>
</dbReference>
<dbReference type="HOGENOM" id="CLU_025086_0_0_11"/>
<dbReference type="Proteomes" id="UP000001409">
    <property type="component" value="Chromosome"/>
</dbReference>
<dbReference type="GO" id="GO:0005737">
    <property type="term" value="C:cytoplasm"/>
    <property type="evidence" value="ECO:0007669"/>
    <property type="project" value="UniProtKB-SubCell"/>
</dbReference>
<dbReference type="GO" id="GO:0005524">
    <property type="term" value="F:ATP binding"/>
    <property type="evidence" value="ECO:0007669"/>
    <property type="project" value="UniProtKB-UniRule"/>
</dbReference>
<dbReference type="GO" id="GO:0000287">
    <property type="term" value="F:magnesium ion binding"/>
    <property type="evidence" value="ECO:0007669"/>
    <property type="project" value="UniProtKB-UniRule"/>
</dbReference>
<dbReference type="GO" id="GO:0004826">
    <property type="term" value="F:phenylalanine-tRNA ligase activity"/>
    <property type="evidence" value="ECO:0007669"/>
    <property type="project" value="UniProtKB-UniRule"/>
</dbReference>
<dbReference type="GO" id="GO:0000049">
    <property type="term" value="F:tRNA binding"/>
    <property type="evidence" value="ECO:0007669"/>
    <property type="project" value="InterPro"/>
</dbReference>
<dbReference type="GO" id="GO:0006432">
    <property type="term" value="P:phenylalanyl-tRNA aminoacylation"/>
    <property type="evidence" value="ECO:0007669"/>
    <property type="project" value="UniProtKB-UniRule"/>
</dbReference>
<dbReference type="CDD" id="cd00496">
    <property type="entry name" value="PheRS_alpha_core"/>
    <property type="match status" value="1"/>
</dbReference>
<dbReference type="FunFam" id="3.30.930.10:FF:000003">
    <property type="entry name" value="Phenylalanine--tRNA ligase alpha subunit"/>
    <property type="match status" value="1"/>
</dbReference>
<dbReference type="Gene3D" id="3.30.930.10">
    <property type="entry name" value="Bira Bifunctional Protein, Domain 2"/>
    <property type="match status" value="1"/>
</dbReference>
<dbReference type="HAMAP" id="MF_00281">
    <property type="entry name" value="Phe_tRNA_synth_alpha1"/>
    <property type="match status" value="1"/>
</dbReference>
<dbReference type="InterPro" id="IPR006195">
    <property type="entry name" value="aa-tRNA-synth_II"/>
</dbReference>
<dbReference type="InterPro" id="IPR045864">
    <property type="entry name" value="aa-tRNA-synth_II/BPL/LPL"/>
</dbReference>
<dbReference type="InterPro" id="IPR004529">
    <property type="entry name" value="Phe-tRNA-synth_IIc_asu"/>
</dbReference>
<dbReference type="InterPro" id="IPR004188">
    <property type="entry name" value="Phe-tRNA_ligase_II_N"/>
</dbReference>
<dbReference type="InterPro" id="IPR022911">
    <property type="entry name" value="Phe_tRNA_ligase_alpha1_bac"/>
</dbReference>
<dbReference type="InterPro" id="IPR002319">
    <property type="entry name" value="Phenylalanyl-tRNA_Synthase"/>
</dbReference>
<dbReference type="InterPro" id="IPR010978">
    <property type="entry name" value="tRNA-bd_arm"/>
</dbReference>
<dbReference type="NCBIfam" id="TIGR00468">
    <property type="entry name" value="pheS"/>
    <property type="match status" value="1"/>
</dbReference>
<dbReference type="PANTHER" id="PTHR11538:SF41">
    <property type="entry name" value="PHENYLALANINE--TRNA LIGASE, MITOCHONDRIAL"/>
    <property type="match status" value="1"/>
</dbReference>
<dbReference type="PANTHER" id="PTHR11538">
    <property type="entry name" value="PHENYLALANYL-TRNA SYNTHETASE"/>
    <property type="match status" value="1"/>
</dbReference>
<dbReference type="Pfam" id="PF02912">
    <property type="entry name" value="Phe_tRNA-synt_N"/>
    <property type="match status" value="1"/>
</dbReference>
<dbReference type="Pfam" id="PF01409">
    <property type="entry name" value="tRNA-synt_2d"/>
    <property type="match status" value="1"/>
</dbReference>
<dbReference type="SUPFAM" id="SSF55681">
    <property type="entry name" value="Class II aaRS and biotin synthetases"/>
    <property type="match status" value="1"/>
</dbReference>
<dbReference type="SUPFAM" id="SSF46589">
    <property type="entry name" value="tRNA-binding arm"/>
    <property type="match status" value="1"/>
</dbReference>
<dbReference type="PROSITE" id="PS50862">
    <property type="entry name" value="AA_TRNA_LIGASE_II"/>
    <property type="match status" value="1"/>
</dbReference>
<keyword id="KW-0030">Aminoacyl-tRNA synthetase</keyword>
<keyword id="KW-0067">ATP-binding</keyword>
<keyword id="KW-0963">Cytoplasm</keyword>
<keyword id="KW-0436">Ligase</keyword>
<keyword id="KW-0460">Magnesium</keyword>
<keyword id="KW-0479">Metal-binding</keyword>
<keyword id="KW-0547">Nucleotide-binding</keyword>
<keyword id="KW-0648">Protein biosynthesis</keyword>
<keyword id="KW-1185">Reference proteome</keyword>
<comment type="catalytic activity">
    <reaction evidence="1">
        <text>tRNA(Phe) + L-phenylalanine + ATP = L-phenylalanyl-tRNA(Phe) + AMP + diphosphate + H(+)</text>
        <dbReference type="Rhea" id="RHEA:19413"/>
        <dbReference type="Rhea" id="RHEA-COMP:9668"/>
        <dbReference type="Rhea" id="RHEA-COMP:9699"/>
        <dbReference type="ChEBI" id="CHEBI:15378"/>
        <dbReference type="ChEBI" id="CHEBI:30616"/>
        <dbReference type="ChEBI" id="CHEBI:33019"/>
        <dbReference type="ChEBI" id="CHEBI:58095"/>
        <dbReference type="ChEBI" id="CHEBI:78442"/>
        <dbReference type="ChEBI" id="CHEBI:78531"/>
        <dbReference type="ChEBI" id="CHEBI:456215"/>
        <dbReference type="EC" id="6.1.1.20"/>
    </reaction>
</comment>
<comment type="cofactor">
    <cofactor evidence="1">
        <name>Mg(2+)</name>
        <dbReference type="ChEBI" id="CHEBI:18420"/>
    </cofactor>
    <text evidence="1">Binds 2 magnesium ions per tetramer.</text>
</comment>
<comment type="subunit">
    <text evidence="1">Tetramer of two alpha and two beta subunits.</text>
</comment>
<comment type="subcellular location">
    <subcellularLocation>
        <location evidence="1">Cytoplasm</location>
    </subcellularLocation>
</comment>
<comment type="similarity">
    <text evidence="1">Belongs to the class-II aminoacyl-tRNA synthetase family. Phe-tRNA synthetase alpha subunit type 1 subfamily.</text>
</comment>
<comment type="sequence caution" evidence="2">
    <conflict type="erroneous initiation">
        <sequence resource="EMBL-CDS" id="BAC18330"/>
    </conflict>
</comment>
<proteinExistence type="inferred from homology"/>
<evidence type="ECO:0000255" key="1">
    <source>
        <dbReference type="HAMAP-Rule" id="MF_00281"/>
    </source>
</evidence>
<evidence type="ECO:0000305" key="2"/>